<dbReference type="EC" id="1.3.1.24" evidence="1 4 5 6"/>
<dbReference type="EMBL" id="U34877">
    <property type="protein sequence ID" value="AAC35588.1"/>
    <property type="molecule type" value="mRNA"/>
</dbReference>
<dbReference type="EMBL" id="X93086">
    <property type="protein sequence ID" value="CAA63635.1"/>
    <property type="molecule type" value="mRNA"/>
</dbReference>
<dbReference type="EMBL" id="AK291862">
    <property type="protein sequence ID" value="BAF84551.1"/>
    <property type="molecule type" value="mRNA"/>
</dbReference>
<dbReference type="EMBL" id="AY616754">
    <property type="protein sequence ID" value="AAT11126.1"/>
    <property type="molecule type" value="Genomic_DNA"/>
</dbReference>
<dbReference type="EMBL" id="AC005189">
    <property type="status" value="NOT_ANNOTATED_CDS"/>
    <property type="molecule type" value="Genomic_DNA"/>
</dbReference>
<dbReference type="EMBL" id="AC004939">
    <property type="protein sequence ID" value="AAD05025.1"/>
    <property type="molecule type" value="Genomic_DNA"/>
</dbReference>
<dbReference type="EMBL" id="AC004985">
    <property type="protein sequence ID" value="AAP21879.1"/>
    <property type="molecule type" value="Genomic_DNA"/>
</dbReference>
<dbReference type="EMBL" id="BC005902">
    <property type="protein sequence ID" value="AAH05902.1"/>
    <property type="molecule type" value="mRNA"/>
</dbReference>
<dbReference type="EMBL" id="BC008456">
    <property type="protein sequence ID" value="AAH08456.1"/>
    <property type="molecule type" value="mRNA"/>
</dbReference>
<dbReference type="CCDS" id="CCDS5472.1"/>
<dbReference type="PIR" id="G02066">
    <property type="entry name" value="G02066"/>
</dbReference>
<dbReference type="PIR" id="S62624">
    <property type="entry name" value="S62624"/>
</dbReference>
<dbReference type="RefSeq" id="NP_000703.2">
    <property type="nucleotide sequence ID" value="NM_000712.3"/>
</dbReference>
<dbReference type="RefSeq" id="NP_001240752.1">
    <property type="nucleotide sequence ID" value="NM_001253823.2"/>
</dbReference>
<dbReference type="RefSeq" id="XP_011513776.1">
    <property type="nucleotide sequence ID" value="XM_011515474.3"/>
</dbReference>
<dbReference type="RefSeq" id="XP_016868009.1">
    <property type="nucleotide sequence ID" value="XM_017012520.3"/>
</dbReference>
<dbReference type="RefSeq" id="XP_024302635.1">
    <property type="nucleotide sequence ID" value="XM_024446867.2"/>
</dbReference>
<dbReference type="PDB" id="2H63">
    <property type="method" value="X-ray"/>
    <property type="resolution" value="2.70 A"/>
    <property type="chains" value="A/B/C/D=7-296"/>
</dbReference>
<dbReference type="PDBsum" id="2H63"/>
<dbReference type="SMR" id="P53004"/>
<dbReference type="BioGRID" id="107113">
    <property type="interactions" value="97"/>
</dbReference>
<dbReference type="CORUM" id="P53004"/>
<dbReference type="DIP" id="DIP-42180N"/>
<dbReference type="FunCoup" id="P53004">
    <property type="interactions" value="258"/>
</dbReference>
<dbReference type="IntAct" id="P53004">
    <property type="interactions" value="53"/>
</dbReference>
<dbReference type="MINT" id="P53004"/>
<dbReference type="STRING" id="9606.ENSP00000385757"/>
<dbReference type="DrugBank" id="DB00157">
    <property type="generic name" value="NADH"/>
</dbReference>
<dbReference type="DrugBank" id="DB14128">
    <property type="generic name" value="Nadide"/>
</dbReference>
<dbReference type="DrugBank" id="DB01586">
    <property type="generic name" value="Ursodeoxycholic acid"/>
</dbReference>
<dbReference type="GlyGen" id="P53004">
    <property type="glycosylation" value="1 site, 1 O-linked glycan (1 site)"/>
</dbReference>
<dbReference type="iPTMnet" id="P53004"/>
<dbReference type="MetOSite" id="P53004"/>
<dbReference type="PhosphoSitePlus" id="P53004"/>
<dbReference type="SwissPalm" id="P53004"/>
<dbReference type="BioMuta" id="BLVRA"/>
<dbReference type="DMDM" id="23830892"/>
<dbReference type="OGP" id="P53004"/>
<dbReference type="REPRODUCTION-2DPAGE" id="IPI00294158"/>
<dbReference type="jPOST" id="P53004"/>
<dbReference type="MassIVE" id="P53004"/>
<dbReference type="PaxDb" id="9606-ENSP00000385757"/>
<dbReference type="PeptideAtlas" id="P53004"/>
<dbReference type="ProteomicsDB" id="56566"/>
<dbReference type="Pumba" id="P53004"/>
<dbReference type="Antibodypedia" id="13185">
    <property type="antibodies" value="346 antibodies from 28 providers"/>
</dbReference>
<dbReference type="DNASU" id="644"/>
<dbReference type="Ensembl" id="ENST00000265523.9">
    <property type="protein sequence ID" value="ENSP00000265523.4"/>
    <property type="gene ID" value="ENSG00000106605.11"/>
</dbReference>
<dbReference type="Ensembl" id="ENST00000402924.5">
    <property type="protein sequence ID" value="ENSP00000385757.1"/>
    <property type="gene ID" value="ENSG00000106605.11"/>
</dbReference>
<dbReference type="GeneID" id="644"/>
<dbReference type="KEGG" id="hsa:644"/>
<dbReference type="MANE-Select" id="ENST00000265523.9">
    <property type="protein sequence ID" value="ENSP00000265523.4"/>
    <property type="RefSeq nucleotide sequence ID" value="NM_000712.4"/>
    <property type="RefSeq protein sequence ID" value="NP_000703.2"/>
</dbReference>
<dbReference type="UCSC" id="uc003tir.4">
    <property type="organism name" value="human"/>
</dbReference>
<dbReference type="AGR" id="HGNC:1062"/>
<dbReference type="CTD" id="644"/>
<dbReference type="DisGeNET" id="644"/>
<dbReference type="GeneCards" id="BLVRA"/>
<dbReference type="HGNC" id="HGNC:1062">
    <property type="gene designation" value="BLVRA"/>
</dbReference>
<dbReference type="HPA" id="ENSG00000106605">
    <property type="expression patterns" value="Low tissue specificity"/>
</dbReference>
<dbReference type="MalaCards" id="BLVRA"/>
<dbReference type="MIM" id="109750">
    <property type="type" value="gene"/>
</dbReference>
<dbReference type="MIM" id="614156">
    <property type="type" value="phenotype"/>
</dbReference>
<dbReference type="neXtProt" id="NX_P53004"/>
<dbReference type="OpenTargets" id="ENSG00000106605"/>
<dbReference type="Orphanet" id="276405">
    <property type="disease" value="Hyperbiliverdinemia"/>
</dbReference>
<dbReference type="PharmGKB" id="PA25373"/>
<dbReference type="VEuPathDB" id="HostDB:ENSG00000106605"/>
<dbReference type="eggNOG" id="ENOG502QTSZ">
    <property type="taxonomic scope" value="Eukaryota"/>
</dbReference>
<dbReference type="GeneTree" id="ENSGT00390000011072"/>
<dbReference type="HOGENOM" id="CLU_053157_0_0_1"/>
<dbReference type="InParanoid" id="P53004"/>
<dbReference type="OMA" id="IQVAFIC"/>
<dbReference type="OrthoDB" id="2129491at2759"/>
<dbReference type="PAN-GO" id="P53004">
    <property type="GO annotations" value="1 GO annotation based on evolutionary models"/>
</dbReference>
<dbReference type="PhylomeDB" id="P53004"/>
<dbReference type="TreeFam" id="TF342889"/>
<dbReference type="BioCyc" id="MetaCyc:HS02928-MONOMER"/>
<dbReference type="BRENDA" id="1.3.1.24">
    <property type="organism ID" value="2681"/>
</dbReference>
<dbReference type="PathwayCommons" id="P53004"/>
<dbReference type="Reactome" id="R-HSA-189483">
    <property type="pathway name" value="Heme degradation"/>
</dbReference>
<dbReference type="Reactome" id="R-HSA-9707564">
    <property type="pathway name" value="Cytoprotection by HMOX1"/>
</dbReference>
<dbReference type="SABIO-RK" id="P53004"/>
<dbReference type="SignaLink" id="P53004"/>
<dbReference type="SIGNOR" id="P53004"/>
<dbReference type="UniPathway" id="UPA00684"/>
<dbReference type="BioGRID-ORCS" id="644">
    <property type="hits" value="12 hits in 1166 CRISPR screens"/>
</dbReference>
<dbReference type="ChiTaRS" id="BLVRA">
    <property type="organism name" value="human"/>
</dbReference>
<dbReference type="EvolutionaryTrace" id="P53004"/>
<dbReference type="GenomeRNAi" id="644"/>
<dbReference type="Pharos" id="P53004">
    <property type="development level" value="Tbio"/>
</dbReference>
<dbReference type="PRO" id="PR:P53004"/>
<dbReference type="Proteomes" id="UP000005640">
    <property type="component" value="Chromosome 7"/>
</dbReference>
<dbReference type="RNAct" id="P53004">
    <property type="molecule type" value="protein"/>
</dbReference>
<dbReference type="Bgee" id="ENSG00000106605">
    <property type="expression patterns" value="Expressed in monocyte and 205 other cell types or tissues"/>
</dbReference>
<dbReference type="ExpressionAtlas" id="P53004">
    <property type="expression patterns" value="baseline and differential"/>
</dbReference>
<dbReference type="GO" id="GO:0005829">
    <property type="term" value="C:cytosol"/>
    <property type="evidence" value="ECO:0000314"/>
    <property type="project" value="UniProtKB"/>
</dbReference>
<dbReference type="GO" id="GO:0070062">
    <property type="term" value="C:extracellular exosome"/>
    <property type="evidence" value="ECO:0007005"/>
    <property type="project" value="UniProtKB"/>
</dbReference>
<dbReference type="GO" id="GO:0106276">
    <property type="term" value="F:biliberdin reductase (NAD+) activity"/>
    <property type="evidence" value="ECO:0000314"/>
    <property type="project" value="UniProtKB"/>
</dbReference>
<dbReference type="GO" id="GO:0106277">
    <property type="term" value="F:biliverdin reductase (NADP+) activity"/>
    <property type="evidence" value="ECO:0007669"/>
    <property type="project" value="RHEA"/>
</dbReference>
<dbReference type="GO" id="GO:0004074">
    <property type="term" value="F:biliverdin reductase [NAD(P)+] activity"/>
    <property type="evidence" value="ECO:0000314"/>
    <property type="project" value="UniProtKB"/>
</dbReference>
<dbReference type="GO" id="GO:0000166">
    <property type="term" value="F:nucleotide binding"/>
    <property type="evidence" value="ECO:0007669"/>
    <property type="project" value="InterPro"/>
</dbReference>
<dbReference type="GO" id="GO:0008270">
    <property type="term" value="F:zinc ion binding"/>
    <property type="evidence" value="ECO:0007669"/>
    <property type="project" value="InterPro"/>
</dbReference>
<dbReference type="GO" id="GO:0042167">
    <property type="term" value="P:heme catabolic process"/>
    <property type="evidence" value="ECO:0000314"/>
    <property type="project" value="UniProtKB"/>
</dbReference>
<dbReference type="FunFam" id="3.30.360.10:FF:000020">
    <property type="entry name" value="Biliverdin reductase A"/>
    <property type="match status" value="1"/>
</dbReference>
<dbReference type="FunFam" id="3.40.50.720:FF:000179">
    <property type="entry name" value="Biliverdin reductase A"/>
    <property type="match status" value="1"/>
</dbReference>
<dbReference type="Gene3D" id="3.30.360.10">
    <property type="entry name" value="Dihydrodipicolinate Reductase, domain 2"/>
    <property type="match status" value="1"/>
</dbReference>
<dbReference type="Gene3D" id="3.40.50.720">
    <property type="entry name" value="NAD(P)-binding Rossmann-like Domain"/>
    <property type="match status" value="1"/>
</dbReference>
<dbReference type="InterPro" id="IPR017094">
    <property type="entry name" value="Biliverdin_Rdtase_A"/>
</dbReference>
<dbReference type="InterPro" id="IPR015249">
    <property type="entry name" value="Biliverdin_Rdtase_cat"/>
</dbReference>
<dbReference type="InterPro" id="IPR000683">
    <property type="entry name" value="Gfo/Idh/MocA-like_OxRdtase_N"/>
</dbReference>
<dbReference type="InterPro" id="IPR051450">
    <property type="entry name" value="Gfo/Idh/MocA_Oxidoreductases"/>
</dbReference>
<dbReference type="InterPro" id="IPR036291">
    <property type="entry name" value="NAD(P)-bd_dom_sf"/>
</dbReference>
<dbReference type="PANTHER" id="PTHR43377">
    <property type="entry name" value="BILIVERDIN REDUCTASE A"/>
    <property type="match status" value="1"/>
</dbReference>
<dbReference type="PANTHER" id="PTHR43377:SF1">
    <property type="entry name" value="BILIVERDIN REDUCTASE A"/>
    <property type="match status" value="1"/>
</dbReference>
<dbReference type="Pfam" id="PF09166">
    <property type="entry name" value="Biliv-reduc_cat"/>
    <property type="match status" value="1"/>
</dbReference>
<dbReference type="Pfam" id="PF01408">
    <property type="entry name" value="GFO_IDH_MocA"/>
    <property type="match status" value="1"/>
</dbReference>
<dbReference type="PIRSF" id="PIRSF037032">
    <property type="entry name" value="Biliverdin_reductase_A"/>
    <property type="match status" value="1"/>
</dbReference>
<dbReference type="SUPFAM" id="SSF55347">
    <property type="entry name" value="Glyceraldehyde-3-phosphate dehydrogenase-like, C-terminal domain"/>
    <property type="match status" value="1"/>
</dbReference>
<dbReference type="SUPFAM" id="SSF51735">
    <property type="entry name" value="NAD(P)-binding Rossmann-fold domains"/>
    <property type="match status" value="1"/>
</dbReference>
<name>BIEA_HUMAN</name>
<protein>
    <recommendedName>
        <fullName evidence="10">Biliverdin reductase A</fullName>
        <shortName evidence="10">BVR A</shortName>
        <ecNumber evidence="1 4 5 6">1.3.1.24</ecNumber>
    </recommendedName>
    <alternativeName>
        <fullName evidence="11">Biliverdin-IX alpha-reductase</fullName>
    </alternativeName>
</protein>
<reference key="1">
    <citation type="journal article" date="1996" name="Biochim. Biophys. Acta">
        <title>Cloning and characterization of the cDNA encoding human biliverdin-IX alpha reductase.</title>
        <authorList>
            <person name="Komuro A."/>
            <person name="Tobe T."/>
            <person name="Nakano Y."/>
            <person name="Yamaguchi T."/>
            <person name="Tomita M."/>
        </authorList>
    </citation>
    <scope>NUCLEOTIDE SEQUENCE [MRNA]</scope>
    <scope>VARIANT THR-3</scope>
</reference>
<reference key="2">
    <citation type="journal article" date="1996" name="Eur. J. Biochem.">
        <title>Human biliverdin IXalpha reductase is a zinc-metalloprotein. Characterization of purified and Escherichia coli expressed enzymes.</title>
        <authorList>
            <person name="Maines M.D."/>
            <person name="Polevoda B.V."/>
            <person name="Huang T.-J."/>
            <person name="McCoubrey W.K. Jr."/>
        </authorList>
    </citation>
    <scope>NUCLEOTIDE SEQUENCE [MRNA]</scope>
    <scope>FUNCTION</scope>
    <scope>CATALYTIC ACTIVITY</scope>
    <scope>BIOPHYSICOCHEMICAL PROPERTIES</scope>
    <scope>COFACTOR</scope>
    <source>
        <tissue>Placenta</tissue>
    </source>
</reference>
<reference key="3">
    <citation type="journal article" date="2004" name="Nat. Genet.">
        <title>Complete sequencing and characterization of 21,243 full-length human cDNAs.</title>
        <authorList>
            <person name="Ota T."/>
            <person name="Suzuki Y."/>
            <person name="Nishikawa T."/>
            <person name="Otsuki T."/>
            <person name="Sugiyama T."/>
            <person name="Irie R."/>
            <person name="Wakamatsu A."/>
            <person name="Hayashi K."/>
            <person name="Sato H."/>
            <person name="Nagai K."/>
            <person name="Kimura K."/>
            <person name="Makita H."/>
            <person name="Sekine M."/>
            <person name="Obayashi M."/>
            <person name="Nishi T."/>
            <person name="Shibahara T."/>
            <person name="Tanaka T."/>
            <person name="Ishii S."/>
            <person name="Yamamoto J."/>
            <person name="Saito K."/>
            <person name="Kawai Y."/>
            <person name="Isono Y."/>
            <person name="Nakamura Y."/>
            <person name="Nagahari K."/>
            <person name="Murakami K."/>
            <person name="Yasuda T."/>
            <person name="Iwayanagi T."/>
            <person name="Wagatsuma M."/>
            <person name="Shiratori A."/>
            <person name="Sudo H."/>
            <person name="Hosoiri T."/>
            <person name="Kaku Y."/>
            <person name="Kodaira H."/>
            <person name="Kondo H."/>
            <person name="Sugawara M."/>
            <person name="Takahashi M."/>
            <person name="Kanda K."/>
            <person name="Yokoi T."/>
            <person name="Furuya T."/>
            <person name="Kikkawa E."/>
            <person name="Omura Y."/>
            <person name="Abe K."/>
            <person name="Kamihara K."/>
            <person name="Katsuta N."/>
            <person name="Sato K."/>
            <person name="Tanikawa M."/>
            <person name="Yamazaki M."/>
            <person name="Ninomiya K."/>
            <person name="Ishibashi T."/>
            <person name="Yamashita H."/>
            <person name="Murakawa K."/>
            <person name="Fujimori K."/>
            <person name="Tanai H."/>
            <person name="Kimata M."/>
            <person name="Watanabe M."/>
            <person name="Hiraoka S."/>
            <person name="Chiba Y."/>
            <person name="Ishida S."/>
            <person name="Ono Y."/>
            <person name="Takiguchi S."/>
            <person name="Watanabe S."/>
            <person name="Yosida M."/>
            <person name="Hotuta T."/>
            <person name="Kusano J."/>
            <person name="Kanehori K."/>
            <person name="Takahashi-Fujii A."/>
            <person name="Hara H."/>
            <person name="Tanase T.-O."/>
            <person name="Nomura Y."/>
            <person name="Togiya S."/>
            <person name="Komai F."/>
            <person name="Hara R."/>
            <person name="Takeuchi K."/>
            <person name="Arita M."/>
            <person name="Imose N."/>
            <person name="Musashino K."/>
            <person name="Yuuki H."/>
            <person name="Oshima A."/>
            <person name="Sasaki N."/>
            <person name="Aotsuka S."/>
            <person name="Yoshikawa Y."/>
            <person name="Matsunawa H."/>
            <person name="Ichihara T."/>
            <person name="Shiohata N."/>
            <person name="Sano S."/>
            <person name="Moriya S."/>
            <person name="Momiyama H."/>
            <person name="Satoh N."/>
            <person name="Takami S."/>
            <person name="Terashima Y."/>
            <person name="Suzuki O."/>
            <person name="Nakagawa S."/>
            <person name="Senoh A."/>
            <person name="Mizoguchi H."/>
            <person name="Goto Y."/>
            <person name="Shimizu F."/>
            <person name="Wakebe H."/>
            <person name="Hishigaki H."/>
            <person name="Watanabe T."/>
            <person name="Sugiyama A."/>
            <person name="Takemoto M."/>
            <person name="Kawakami B."/>
            <person name="Yamazaki M."/>
            <person name="Watanabe K."/>
            <person name="Kumagai A."/>
            <person name="Itakura S."/>
            <person name="Fukuzumi Y."/>
            <person name="Fujimori Y."/>
            <person name="Komiyama M."/>
            <person name="Tashiro H."/>
            <person name="Tanigami A."/>
            <person name="Fujiwara T."/>
            <person name="Ono T."/>
            <person name="Yamada K."/>
            <person name="Fujii Y."/>
            <person name="Ozaki K."/>
            <person name="Hirao M."/>
            <person name="Ohmori Y."/>
            <person name="Kawabata A."/>
            <person name="Hikiji T."/>
            <person name="Kobatake N."/>
            <person name="Inagaki H."/>
            <person name="Ikema Y."/>
            <person name="Okamoto S."/>
            <person name="Okitani R."/>
            <person name="Kawakami T."/>
            <person name="Noguchi S."/>
            <person name="Itoh T."/>
            <person name="Shigeta K."/>
            <person name="Senba T."/>
            <person name="Matsumura K."/>
            <person name="Nakajima Y."/>
            <person name="Mizuno T."/>
            <person name="Morinaga M."/>
            <person name="Sasaki M."/>
            <person name="Togashi T."/>
            <person name="Oyama M."/>
            <person name="Hata H."/>
            <person name="Watanabe M."/>
            <person name="Komatsu T."/>
            <person name="Mizushima-Sugano J."/>
            <person name="Satoh T."/>
            <person name="Shirai Y."/>
            <person name="Takahashi Y."/>
            <person name="Nakagawa K."/>
            <person name="Okumura K."/>
            <person name="Nagase T."/>
            <person name="Nomura N."/>
            <person name="Kikuchi H."/>
            <person name="Masuho Y."/>
            <person name="Yamashita R."/>
            <person name="Nakai K."/>
            <person name="Yada T."/>
            <person name="Nakamura Y."/>
            <person name="Ohara O."/>
            <person name="Isogai T."/>
            <person name="Sugano S."/>
        </authorList>
    </citation>
    <scope>NUCLEOTIDE SEQUENCE [LARGE SCALE MRNA]</scope>
    <source>
        <tissue>Skeletal muscle</tissue>
    </source>
</reference>
<reference key="4">
    <citation type="submission" date="2004-05" db="EMBL/GenBank/DDBJ databases">
        <authorList>
            <consortium name="NIEHS SNPs program"/>
        </authorList>
    </citation>
    <scope>NUCLEOTIDE SEQUENCE [GENOMIC DNA]</scope>
    <scope>VARIANTS THR-3; VAL-37 AND ARG-56</scope>
</reference>
<reference key="5">
    <citation type="journal article" date="2003" name="Nature">
        <title>The DNA sequence of human chromosome 7.</title>
        <authorList>
            <person name="Hillier L.W."/>
            <person name="Fulton R.S."/>
            <person name="Fulton L.A."/>
            <person name="Graves T.A."/>
            <person name="Pepin K.H."/>
            <person name="Wagner-McPherson C."/>
            <person name="Layman D."/>
            <person name="Maas J."/>
            <person name="Jaeger S."/>
            <person name="Walker R."/>
            <person name="Wylie K."/>
            <person name="Sekhon M."/>
            <person name="Becker M.C."/>
            <person name="O'Laughlin M.D."/>
            <person name="Schaller M.E."/>
            <person name="Fewell G.A."/>
            <person name="Delehaunty K.D."/>
            <person name="Miner T.L."/>
            <person name="Nash W.E."/>
            <person name="Cordes M."/>
            <person name="Du H."/>
            <person name="Sun H."/>
            <person name="Edwards J."/>
            <person name="Bradshaw-Cordum H."/>
            <person name="Ali J."/>
            <person name="Andrews S."/>
            <person name="Isak A."/>
            <person name="Vanbrunt A."/>
            <person name="Nguyen C."/>
            <person name="Du F."/>
            <person name="Lamar B."/>
            <person name="Courtney L."/>
            <person name="Kalicki J."/>
            <person name="Ozersky P."/>
            <person name="Bielicki L."/>
            <person name="Scott K."/>
            <person name="Holmes A."/>
            <person name="Harkins R."/>
            <person name="Harris A."/>
            <person name="Strong C.M."/>
            <person name="Hou S."/>
            <person name="Tomlinson C."/>
            <person name="Dauphin-Kohlberg S."/>
            <person name="Kozlowicz-Reilly A."/>
            <person name="Leonard S."/>
            <person name="Rohlfing T."/>
            <person name="Rock S.M."/>
            <person name="Tin-Wollam A.-M."/>
            <person name="Abbott A."/>
            <person name="Minx P."/>
            <person name="Maupin R."/>
            <person name="Strowmatt C."/>
            <person name="Latreille P."/>
            <person name="Miller N."/>
            <person name="Johnson D."/>
            <person name="Murray J."/>
            <person name="Woessner J.P."/>
            <person name="Wendl M.C."/>
            <person name="Yang S.-P."/>
            <person name="Schultz B.R."/>
            <person name="Wallis J.W."/>
            <person name="Spieth J."/>
            <person name="Bieri T.A."/>
            <person name="Nelson J.O."/>
            <person name="Berkowicz N."/>
            <person name="Wohldmann P.E."/>
            <person name="Cook L.L."/>
            <person name="Hickenbotham M.T."/>
            <person name="Eldred J."/>
            <person name="Williams D."/>
            <person name="Bedell J.A."/>
            <person name="Mardis E.R."/>
            <person name="Clifton S.W."/>
            <person name="Chissoe S.L."/>
            <person name="Marra M.A."/>
            <person name="Raymond C."/>
            <person name="Haugen E."/>
            <person name="Gillett W."/>
            <person name="Zhou Y."/>
            <person name="James R."/>
            <person name="Phelps K."/>
            <person name="Iadanoto S."/>
            <person name="Bubb K."/>
            <person name="Simms E."/>
            <person name="Levy R."/>
            <person name="Clendenning J."/>
            <person name="Kaul R."/>
            <person name="Kent W.J."/>
            <person name="Furey T.S."/>
            <person name="Baertsch R.A."/>
            <person name="Brent M.R."/>
            <person name="Keibler E."/>
            <person name="Flicek P."/>
            <person name="Bork P."/>
            <person name="Suyama M."/>
            <person name="Bailey J.A."/>
            <person name="Portnoy M.E."/>
            <person name="Torrents D."/>
            <person name="Chinwalla A.T."/>
            <person name="Gish W.R."/>
            <person name="Eddy S.R."/>
            <person name="McPherson J.D."/>
            <person name="Olson M.V."/>
            <person name="Eichler E.E."/>
            <person name="Green E.D."/>
            <person name="Waterston R.H."/>
            <person name="Wilson R.K."/>
        </authorList>
    </citation>
    <scope>NUCLEOTIDE SEQUENCE [LARGE SCALE GENOMIC DNA]</scope>
</reference>
<reference key="6">
    <citation type="journal article" date="2004" name="Genome Res.">
        <title>The status, quality, and expansion of the NIH full-length cDNA project: the Mammalian Gene Collection (MGC).</title>
        <authorList>
            <consortium name="The MGC Project Team"/>
        </authorList>
    </citation>
    <scope>NUCLEOTIDE SEQUENCE [LARGE SCALE MRNA]</scope>
    <scope>VARIANT THR-3</scope>
    <source>
        <tissue>Brain</tissue>
        <tissue>Prostate</tissue>
    </source>
</reference>
<reference key="7">
    <citation type="journal article" date="1993" name="Arch. Biochem. Biophys.">
        <title>Purification and characterization of human biliverdin reductase.</title>
        <authorList>
            <person name="Maines M.D."/>
            <person name="Trakshel G.M."/>
        </authorList>
    </citation>
    <scope>PROTEIN SEQUENCE OF 3-36; 48-74 AND 228-248</scope>
    <scope>FUNCTION</scope>
    <scope>CATALYTIC ACTIVITY</scope>
    <scope>SUBCELLULAR LOCATION</scope>
    <scope>TISSUE SPECIFICITY</scope>
    <source>
        <tissue>Liver</tissue>
    </source>
</reference>
<reference key="8">
    <citation type="journal article" date="1994" name="J. Biol. Chem.">
        <title>Biliverdin-IX alpha reductase and biliverdin-IX beta reductase from human liver. Purification and characterization.</title>
        <authorList>
            <person name="Yamaguchi T."/>
            <person name="Komoda Y."/>
            <person name="Nakajima H."/>
        </authorList>
    </citation>
    <scope>PROTEIN SEQUENCE OF 3-22</scope>
    <scope>FUNCTION</scope>
    <scope>CATALYTIC ACTIVITY</scope>
    <scope>SUBCELLULAR LOCATION</scope>
    <scope>TISSUE SPECIFICITY</scope>
    <source>
        <tissue>Liver</tissue>
    </source>
</reference>
<reference key="9">
    <citation type="journal article" date="2000" name="J. Biol. Chem.">
        <title>Studies on the specificity of the tetrapyrrole substrate for human biliverdin-IXalpha reductase and biliverdin-IXbeta reductase. Structure-activity relationships define models for both active sites.</title>
        <authorList>
            <person name="Cunningham O."/>
            <person name="Dunne A."/>
            <person name="Sabido P."/>
            <person name="Lightner D."/>
            <person name="Mantle T.J."/>
        </authorList>
    </citation>
    <scope>FUNCTION</scope>
    <scope>CATALYTIC ACTIVITY</scope>
</reference>
<reference key="10">
    <citation type="journal article" date="2008" name="Proc. Natl. Acad. Sci. U.S.A.">
        <title>A quantitative atlas of mitotic phosphorylation.</title>
        <authorList>
            <person name="Dephoure N."/>
            <person name="Zhou C."/>
            <person name="Villen J."/>
            <person name="Beausoleil S.A."/>
            <person name="Bakalarski C.E."/>
            <person name="Elledge S.J."/>
            <person name="Gygi S.P."/>
        </authorList>
    </citation>
    <scope>PHOSPHORYLATION [LARGE SCALE ANALYSIS] AT SER-230</scope>
    <scope>IDENTIFICATION BY MASS SPECTROMETRY [LARGE SCALE ANALYSIS]</scope>
    <source>
        <tissue>Cervix carcinoma</tissue>
    </source>
</reference>
<reference key="11">
    <citation type="journal article" date="2009" name="Anal. Chem.">
        <title>Lys-N and trypsin cover complementary parts of the phosphoproteome in a refined SCX-based approach.</title>
        <authorList>
            <person name="Gauci S."/>
            <person name="Helbig A.O."/>
            <person name="Slijper M."/>
            <person name="Krijgsveld J."/>
            <person name="Heck A.J."/>
            <person name="Mohammed S."/>
        </authorList>
    </citation>
    <scope>IDENTIFICATION BY MASS SPECTROMETRY [LARGE SCALE ANALYSIS]</scope>
</reference>
<reference key="12">
    <citation type="journal article" date="2009" name="Liver Int.">
        <title>A novel mutation in the biliverdin reductase-A gene combined with liver cirrhosis results in hyperbiliverdinaemia (green jaundice).</title>
        <authorList>
            <person name="Gafvels M."/>
            <person name="Holmstrom P."/>
            <person name="Somell A."/>
            <person name="Sjovall F."/>
            <person name="Svensson J.O."/>
            <person name="Stahle L."/>
            <person name="Broome U."/>
            <person name="Stal P."/>
        </authorList>
    </citation>
    <scope>INVOLVEMENT IN HBLVD</scope>
</reference>
<reference key="13">
    <citation type="journal article" date="2009" name="Sci. Signal.">
        <title>Quantitative phosphoproteomic analysis of T cell receptor signaling reveals system-wide modulation of protein-protein interactions.</title>
        <authorList>
            <person name="Mayya V."/>
            <person name="Lundgren D.H."/>
            <person name="Hwang S.-I."/>
            <person name="Rezaul K."/>
            <person name="Wu L."/>
            <person name="Eng J.K."/>
            <person name="Rodionov V."/>
            <person name="Han D.K."/>
        </authorList>
    </citation>
    <scope>PHOSPHORYLATION [LARGE SCALE ANALYSIS] AT THR-174 AND SER-178</scope>
    <scope>IDENTIFICATION BY MASS SPECTROMETRY [LARGE SCALE ANALYSIS]</scope>
    <source>
        <tissue>Leukemic T-cell</tissue>
    </source>
</reference>
<reference key="14">
    <citation type="journal article" date="2009" name="Science">
        <title>Lysine acetylation targets protein complexes and co-regulates major cellular functions.</title>
        <authorList>
            <person name="Choudhary C."/>
            <person name="Kumar C."/>
            <person name="Gnad F."/>
            <person name="Nielsen M.L."/>
            <person name="Rehman M."/>
            <person name="Walther T.C."/>
            <person name="Olsen J.V."/>
            <person name="Mann M."/>
        </authorList>
    </citation>
    <scope>ACETYLATION [LARGE SCALE ANALYSIS] AT LYS-248 AND LYS-253</scope>
    <scope>IDENTIFICATION BY MASS SPECTROMETRY [LARGE SCALE ANALYSIS]</scope>
</reference>
<reference key="15">
    <citation type="journal article" date="2011" name="BMC Syst. Biol.">
        <title>Initial characterization of the human central proteome.</title>
        <authorList>
            <person name="Burkard T.R."/>
            <person name="Planyavsky M."/>
            <person name="Kaupe I."/>
            <person name="Breitwieser F.P."/>
            <person name="Buerckstuemmer T."/>
            <person name="Bennett K.L."/>
            <person name="Superti-Furga G."/>
            <person name="Colinge J."/>
        </authorList>
    </citation>
    <scope>IDENTIFICATION BY MASS SPECTROMETRY [LARGE SCALE ANALYSIS]</scope>
</reference>
<reference key="16">
    <citation type="journal article" date="2013" name="J. Proteome Res.">
        <title>Toward a comprehensive characterization of a human cancer cell phosphoproteome.</title>
        <authorList>
            <person name="Zhou H."/>
            <person name="Di Palma S."/>
            <person name="Preisinger C."/>
            <person name="Peng M."/>
            <person name="Polat A.N."/>
            <person name="Heck A.J."/>
            <person name="Mohammed S."/>
        </authorList>
    </citation>
    <scope>IDENTIFICATION BY MASS SPECTROMETRY [LARGE SCALE ANALYSIS]</scope>
    <source>
        <tissue>Erythroleukemia</tissue>
    </source>
</reference>
<reference key="17">
    <citation type="journal article" date="2014" name="J. Proteomics">
        <title>An enzyme assisted RP-RPLC approach for in-depth analysis of human liver phosphoproteome.</title>
        <authorList>
            <person name="Bian Y."/>
            <person name="Song C."/>
            <person name="Cheng K."/>
            <person name="Dong M."/>
            <person name="Wang F."/>
            <person name="Huang J."/>
            <person name="Sun D."/>
            <person name="Wang L."/>
            <person name="Ye M."/>
            <person name="Zou H."/>
        </authorList>
    </citation>
    <scope>IDENTIFICATION BY MASS SPECTROMETRY [LARGE SCALE ANALYSIS]</scope>
    <source>
        <tissue>Liver</tissue>
    </source>
</reference>
<reference key="18">
    <citation type="journal article" date="2015" name="Proteomics">
        <title>N-terminome analysis of the human mitochondrial proteome.</title>
        <authorList>
            <person name="Vaca Jacome A.S."/>
            <person name="Rabilloud T."/>
            <person name="Schaeffer-Reiss C."/>
            <person name="Rompais M."/>
            <person name="Ayoub D."/>
            <person name="Lane L."/>
            <person name="Bairoch A."/>
            <person name="Van Dorsselaer A."/>
            <person name="Carapito C."/>
        </authorList>
    </citation>
    <scope>IDENTIFICATION BY MASS SPECTROMETRY [LARGE SCALE ANALYSIS]</scope>
</reference>
<reference evidence="15" key="19">
    <citation type="submission" date="2009-02" db="PDB data bank">
        <title>Crystal structure of human biliverdin reductase A.</title>
        <authorList>
            <consortium name="Structural genomics consortium (SGC)"/>
        </authorList>
    </citation>
    <scope>X-RAY CRYSTALLOGRAPHY (2.7 ANGSTROMS) OF 7-296 IN COMPLEX WITH NADP</scope>
</reference>
<keyword id="KW-0002">3D-structure</keyword>
<keyword id="KW-0007">Acetylation</keyword>
<keyword id="KW-0963">Cytoplasm</keyword>
<keyword id="KW-0903">Direct protein sequencing</keyword>
<keyword id="KW-0479">Metal-binding</keyword>
<keyword id="KW-0520">NAD</keyword>
<keyword id="KW-0521">NADP</keyword>
<keyword id="KW-0560">Oxidoreductase</keyword>
<keyword id="KW-0597">Phosphoprotein</keyword>
<keyword id="KW-1267">Proteomics identification</keyword>
<keyword id="KW-1185">Reference proteome</keyword>
<keyword id="KW-0862">Zinc</keyword>
<accession>P53004</accession>
<accession>A8K747</accession>
<accession>O95019</accession>
<accession>Q86UX0</accession>
<accession>Q96QL4</accession>
<accession>Q9BRW8</accession>
<proteinExistence type="evidence at protein level"/>
<evidence type="ECO:0000269" key="1">
    <source>
    </source>
</evidence>
<evidence type="ECO:0000269" key="2">
    <source>
    </source>
</evidence>
<evidence type="ECO:0000269" key="3">
    <source>
    </source>
</evidence>
<evidence type="ECO:0000269" key="4">
    <source>
    </source>
</evidence>
<evidence type="ECO:0000269" key="5">
    <source>
    </source>
</evidence>
<evidence type="ECO:0000269" key="6">
    <source>
    </source>
</evidence>
<evidence type="ECO:0000269" key="7">
    <source>
    </source>
</evidence>
<evidence type="ECO:0000269" key="8">
    <source ref="19"/>
</evidence>
<evidence type="ECO:0000269" key="9">
    <source ref="4"/>
</evidence>
<evidence type="ECO:0000303" key="10">
    <source>
    </source>
</evidence>
<evidence type="ECO:0000303" key="11">
    <source>
    </source>
</evidence>
<evidence type="ECO:0000305" key="12"/>
<evidence type="ECO:0000305" key="13">
    <source>
    </source>
</evidence>
<evidence type="ECO:0000312" key="14">
    <source>
        <dbReference type="HGNC" id="HGNC:1062"/>
    </source>
</evidence>
<evidence type="ECO:0007744" key="15">
    <source>
        <dbReference type="PDB" id="2H63"/>
    </source>
</evidence>
<evidence type="ECO:0007744" key="16">
    <source>
    </source>
</evidence>
<evidence type="ECO:0007744" key="17">
    <source>
    </source>
</evidence>
<evidence type="ECO:0007744" key="18">
    <source>
    </source>
</evidence>
<evidence type="ECO:0007829" key="19">
    <source>
        <dbReference type="PDB" id="2H63"/>
    </source>
</evidence>
<gene>
    <name evidence="14" type="primary">BLVRA</name>
    <name type="synonym">BLVR</name>
    <name evidence="10" type="synonym">BVR</name>
</gene>
<comment type="function">
    <text evidence="1 4 5 6">Reduces the gamma-methene bridge of the open tetrapyrrole, biliverdin IXalpha, to bilirubin with the concomitant oxidation of a NADH or NADPH cofactor (PubMed:10858451, PubMed:7929092, PubMed:8424666, PubMed:8631357). Does not reduce bilirubin IXbeta (PubMed:10858451). Uses the reactants NADH or NADPH depending on the pH; NADH is used at the acidic pH range (6-6.9) and NADPH at the alkaline range (8.5-8.7) (PubMed:7929092, PubMed:8424666, PubMed:8631357). NADPH, however, is the probable reactant in biological systems (PubMed:7929092).</text>
</comment>
<comment type="catalytic activity">
    <reaction evidence="1 4 5 6">
        <text>(4Z,15Z)-bilirubin IXalpha + NAD(+) = biliverdin IXalpha + NADH + H(+)</text>
        <dbReference type="Rhea" id="RHEA:15797"/>
        <dbReference type="ChEBI" id="CHEBI:15378"/>
        <dbReference type="ChEBI" id="CHEBI:57540"/>
        <dbReference type="ChEBI" id="CHEBI:57945"/>
        <dbReference type="ChEBI" id="CHEBI:57977"/>
        <dbReference type="ChEBI" id="CHEBI:57991"/>
        <dbReference type="EC" id="1.3.1.24"/>
    </reaction>
    <physiologicalReaction direction="right-to-left" evidence="1 4 5 6">
        <dbReference type="Rhea" id="RHEA:15799"/>
    </physiologicalReaction>
</comment>
<comment type="catalytic activity">
    <reaction evidence="1 4 5 6">
        <text>(4Z,15Z)-bilirubin IXalpha + NADP(+) = biliverdin IXalpha + NADPH + H(+)</text>
        <dbReference type="Rhea" id="RHEA:15793"/>
        <dbReference type="ChEBI" id="CHEBI:15378"/>
        <dbReference type="ChEBI" id="CHEBI:57783"/>
        <dbReference type="ChEBI" id="CHEBI:57977"/>
        <dbReference type="ChEBI" id="CHEBI:57991"/>
        <dbReference type="ChEBI" id="CHEBI:58349"/>
        <dbReference type="EC" id="1.3.1.24"/>
    </reaction>
    <physiologicalReaction direction="right-to-left" evidence="1 4 5 6">
        <dbReference type="Rhea" id="RHEA:15795"/>
    </physiologicalReaction>
</comment>
<comment type="cofactor">
    <cofactor evidence="6">
        <name>Zn(2+)</name>
        <dbReference type="ChEBI" id="CHEBI:29105"/>
    </cofactor>
    <text evidence="13">Binds 1 zinc ion per subunit.</text>
</comment>
<comment type="biophysicochemical properties">
    <kinetics>
        <KM evidence="6">3.2 uM for NADPH</KM>
        <KM evidence="6">50 uM for NADH</KM>
    </kinetics>
</comment>
<comment type="pathway">
    <text>Porphyrin-containing compound metabolism; protoheme degradation.</text>
</comment>
<comment type="subunit">
    <text evidence="8">Monomer.</text>
</comment>
<comment type="interaction">
    <interactant intactId="EBI-7410441">
        <id>P53004</id>
    </interactant>
    <interactant intactId="EBI-739832">
        <id>Q8TBB1</id>
        <label>LNX1</label>
    </interactant>
    <organismsDiffer>false</organismsDiffer>
    <experiments>5</experiments>
</comment>
<comment type="interaction">
    <interactant intactId="EBI-7410441">
        <id>P53004</id>
    </interactant>
    <interactant intactId="EBI-959949">
        <id>P28482</id>
        <label>MAPK1</label>
    </interactant>
    <organismsDiffer>false</organismsDiffer>
    <experiments>2</experiments>
</comment>
<comment type="subcellular location">
    <subcellularLocation>
        <location evidence="4 5">Cytoplasm</location>
        <location evidence="4 5">Cytosol</location>
    </subcellularLocation>
</comment>
<comment type="tissue specificity">
    <text evidence="4 5">Liver.</text>
</comment>
<comment type="disease" evidence="3">
    <disease id="DI-03209">
        <name>Hyperbiliverdinemia</name>
        <acronym>HBLVD</acronym>
        <description>A condition characterized by a green discoloration of the skin, urine, serum, and other bodily fluids. It is due to increased biliverdin resulting from inefficient conversion to bilirubin. Affected individuals appear to have symptoms only in the context of obstructive cholestasis and/or liver failure. In some cases, green jaundice can resolve after resolution of obstructive cholestasis.</description>
        <dbReference type="MIM" id="614156"/>
    </disease>
    <text>The disease is caused by variants affecting the gene represented in this entry.</text>
</comment>
<comment type="similarity">
    <text evidence="12">Belongs to the Gfo/Idh/MocA family. Biliverdin reductase subfamily.</text>
</comment>
<organism>
    <name type="scientific">Homo sapiens</name>
    <name type="common">Human</name>
    <dbReference type="NCBI Taxonomy" id="9606"/>
    <lineage>
        <taxon>Eukaryota</taxon>
        <taxon>Metazoa</taxon>
        <taxon>Chordata</taxon>
        <taxon>Craniata</taxon>
        <taxon>Vertebrata</taxon>
        <taxon>Euteleostomi</taxon>
        <taxon>Mammalia</taxon>
        <taxon>Eutheria</taxon>
        <taxon>Euarchontoglires</taxon>
        <taxon>Primates</taxon>
        <taxon>Haplorrhini</taxon>
        <taxon>Catarrhini</taxon>
        <taxon>Hominidae</taxon>
        <taxon>Homo</taxon>
    </lineage>
</organism>
<sequence>MNAEPERKFGVVVVGVGRAGSVRMRDLRNPHPSSAFLNLIGFVSRRELGSIDGVQQISLEDALSSQEVEVAYICSESSSHEDYIRQFLNAGKHVLVEYPMTLSLAAAQELWELAEQKGKVLHEEHVELLMEEFAFLKKEVVGKDLLKGSLLFTAGPLEEERFGFPAFSGISRLTWLVSLFGELSLVSATLEERKEDQYMKMTVCLETEKKSPLSWIEEKGPGLKRNRYLSFHFKSGSLENVPNVGVNKNIFLKDQNIFVQKLLGQFSEKELAAEKKRILHCLGLAEEIQKYCCSRK</sequence>
<feature type="propeptide" id="PRO_0000010852" evidence="4 5">
    <location>
        <begin position="1"/>
        <end position="2"/>
    </location>
</feature>
<feature type="chain" id="PRO_0000010853" description="Biliverdin reductase A" evidence="6">
    <location>
        <begin position="3"/>
        <end position="296"/>
    </location>
</feature>
<feature type="binding site" evidence="8 15">
    <location>
        <begin position="16"/>
        <end position="19"/>
    </location>
    <ligand>
        <name>NADP(+)</name>
        <dbReference type="ChEBI" id="CHEBI:58349"/>
    </ligand>
</feature>
<feature type="binding site" evidence="8 15">
    <location>
        <begin position="44"/>
        <end position="46"/>
    </location>
    <ligand>
        <name>NADP(+)</name>
        <dbReference type="ChEBI" id="CHEBI:58349"/>
    </ligand>
</feature>
<feature type="binding site" evidence="8 15">
    <location>
        <begin position="77"/>
        <end position="80"/>
    </location>
    <ligand>
        <name>NADP(+)</name>
        <dbReference type="ChEBI" id="CHEBI:58349"/>
    </ligand>
</feature>
<feature type="binding site" evidence="8 15">
    <location>
        <position position="98"/>
    </location>
    <ligand>
        <name>NADP(+)</name>
        <dbReference type="ChEBI" id="CHEBI:58349"/>
    </ligand>
</feature>
<feature type="binding site" evidence="10">
    <location>
        <position position="280"/>
    </location>
    <ligand>
        <name>Zn(2+)</name>
        <dbReference type="ChEBI" id="CHEBI:29105"/>
    </ligand>
</feature>
<feature type="binding site" evidence="10">
    <location>
        <position position="281"/>
    </location>
    <ligand>
        <name>Zn(2+)</name>
        <dbReference type="ChEBI" id="CHEBI:29105"/>
    </ligand>
</feature>
<feature type="binding site" evidence="10">
    <location>
        <position position="292"/>
    </location>
    <ligand>
        <name>Zn(2+)</name>
        <dbReference type="ChEBI" id="CHEBI:29105"/>
    </ligand>
</feature>
<feature type="binding site" evidence="10">
    <location>
        <position position="293"/>
    </location>
    <ligand>
        <name>Zn(2+)</name>
        <dbReference type="ChEBI" id="CHEBI:29105"/>
    </ligand>
</feature>
<feature type="modified residue" description="Phosphothreonine" evidence="18">
    <location>
        <position position="174"/>
    </location>
</feature>
<feature type="modified residue" description="Phosphoserine" evidence="18">
    <location>
        <position position="178"/>
    </location>
</feature>
<feature type="modified residue" description="Phosphoserine" evidence="16">
    <location>
        <position position="230"/>
    </location>
</feature>
<feature type="modified residue" description="N6-acetyllysine" evidence="17">
    <location>
        <position position="248"/>
    </location>
</feature>
<feature type="modified residue" description="N6-acetyllysine" evidence="17">
    <location>
        <position position="253"/>
    </location>
</feature>
<feature type="sequence variant" id="VAR_019230" description="In dbSNP:rs699512." evidence="2 7 9">
    <original>A</original>
    <variation>T</variation>
    <location>
        <position position="3"/>
    </location>
</feature>
<feature type="sequence variant" id="VAR_019231" description="In dbSNP:rs17245918." evidence="9">
    <original>L</original>
    <variation>V</variation>
    <location>
        <position position="37"/>
    </location>
</feature>
<feature type="sequence variant" id="VAR_014851" description="In dbSNP:rs1050916." evidence="9">
    <original>Q</original>
    <variation>R</variation>
    <location>
        <position position="56"/>
    </location>
</feature>
<feature type="sequence conflict" description="In Ref. 6; AAH05902." evidence="12" ref="6">
    <original>L</original>
    <variation>S</variation>
    <location>
        <position position="121"/>
    </location>
</feature>
<feature type="sequence conflict" description="In Ref. 2; CAA63635." evidence="12" ref="2">
    <original>AG</original>
    <variation>SD</variation>
    <location>
        <begin position="154"/>
        <end position="155"/>
    </location>
</feature>
<feature type="sequence conflict" description="In Ref. 2; CAA63635." evidence="12" ref="2">
    <original>E</original>
    <variation>D</variation>
    <location>
        <position position="160"/>
    </location>
</feature>
<feature type="strand" evidence="19">
    <location>
        <begin position="9"/>
        <end position="14"/>
    </location>
</feature>
<feature type="helix" evidence="19">
    <location>
        <begin position="18"/>
        <end position="28"/>
    </location>
</feature>
<feature type="helix" evidence="19">
    <location>
        <begin position="33"/>
        <end position="36"/>
    </location>
</feature>
<feature type="strand" evidence="19">
    <location>
        <begin position="37"/>
        <end position="43"/>
    </location>
</feature>
<feature type="strand" evidence="19">
    <location>
        <begin position="50"/>
        <end position="53"/>
    </location>
</feature>
<feature type="helix" evidence="19">
    <location>
        <begin position="59"/>
        <end position="64"/>
    </location>
</feature>
<feature type="strand" evidence="19">
    <location>
        <begin position="70"/>
        <end position="73"/>
    </location>
</feature>
<feature type="helix" evidence="19">
    <location>
        <begin position="77"/>
        <end position="89"/>
    </location>
</feature>
<feature type="strand" evidence="19">
    <location>
        <begin position="93"/>
        <end position="98"/>
    </location>
</feature>
<feature type="helix" evidence="19">
    <location>
        <begin position="104"/>
        <end position="117"/>
    </location>
</feature>
<feature type="strand" evidence="19">
    <location>
        <begin position="121"/>
        <end position="124"/>
    </location>
</feature>
<feature type="helix" evidence="19">
    <location>
        <begin position="126"/>
        <end position="129"/>
    </location>
</feature>
<feature type="helix" evidence="19">
    <location>
        <begin position="131"/>
        <end position="140"/>
    </location>
</feature>
<feature type="strand" evidence="19">
    <location>
        <begin position="145"/>
        <end position="154"/>
    </location>
</feature>
<feature type="helix" evidence="19">
    <location>
        <begin position="159"/>
        <end position="162"/>
    </location>
</feature>
<feature type="helix" evidence="19">
    <location>
        <begin position="165"/>
        <end position="168"/>
    </location>
</feature>
<feature type="helix" evidence="19">
    <location>
        <begin position="170"/>
        <end position="180"/>
    </location>
</feature>
<feature type="strand" evidence="19">
    <location>
        <begin position="182"/>
        <end position="193"/>
    </location>
</feature>
<feature type="strand" evidence="19">
    <location>
        <begin position="198"/>
        <end position="207"/>
    </location>
</feature>
<feature type="strand" evidence="19">
    <location>
        <begin position="212"/>
        <end position="219"/>
    </location>
</feature>
<feature type="strand" evidence="19">
    <location>
        <begin position="226"/>
        <end position="235"/>
    </location>
</feature>
<feature type="helix" evidence="19">
    <location>
        <begin position="250"/>
        <end position="262"/>
    </location>
</feature>
<feature type="helix" evidence="19">
    <location>
        <begin position="268"/>
        <end position="290"/>
    </location>
</feature>